<reference key="1">
    <citation type="journal article" date="2004" name="Science">
        <title>The 1.2-megabase genome sequence of Mimivirus.</title>
        <authorList>
            <person name="Raoult D."/>
            <person name="Audic S."/>
            <person name="Robert C."/>
            <person name="Abergel C."/>
            <person name="Renesto P."/>
            <person name="Ogata H."/>
            <person name="La Scola B."/>
            <person name="Susan M."/>
            <person name="Claverie J.-M."/>
        </authorList>
    </citation>
    <scope>NUCLEOTIDE SEQUENCE [LARGE SCALE GENOMIC DNA]</scope>
    <source>
        <strain>Rowbotham-Bradford</strain>
    </source>
</reference>
<organismHost>
    <name type="scientific">Acanthamoeba polyphaga</name>
    <name type="common">Amoeba</name>
    <dbReference type="NCBI Taxonomy" id="5757"/>
</organismHost>
<sequence>MSTENFDPTQHIEEPMNDLEIIHIHNKNNTYHLTKQILLDSMVPNNVHCFFYHILTKNSEEFNKIYGSYARLIVRNIEEADLYLNVDNDAFNHIINYIQTSKINGEKIYNENWKKIDDIIDLATILGMGNLVTTLRKLHPTEEEINRKIGIIKSTVRSSMFSLKYLFDCDPTMYQDIIDDAINRNKDLIIERYIKPTMYADNKVNSEIMSVICSLCSNYLVSRIISKTNH</sequence>
<feature type="chain" id="PRO_0000244037" description="Uncharacterized protein R317">
    <location>
        <begin position="1"/>
        <end position="230"/>
    </location>
</feature>
<gene>
    <name type="ordered locus">MIMI_R317</name>
</gene>
<accession>Q5UPZ8</accession>
<name>YR317_MIMIV</name>
<dbReference type="EMBL" id="AY653733">
    <property type="protein sequence ID" value="AAV50587.1"/>
    <property type="molecule type" value="Genomic_DNA"/>
</dbReference>
<dbReference type="SMR" id="Q5UPZ8"/>
<dbReference type="KEGG" id="vg:9924934"/>
<dbReference type="OrthoDB" id="17542at10239"/>
<dbReference type="Proteomes" id="UP000001134">
    <property type="component" value="Genome"/>
</dbReference>
<organism>
    <name type="scientific">Acanthamoeba polyphaga mimivirus</name>
    <name type="common">APMV</name>
    <dbReference type="NCBI Taxonomy" id="212035"/>
    <lineage>
        <taxon>Viruses</taxon>
        <taxon>Varidnaviria</taxon>
        <taxon>Bamfordvirae</taxon>
        <taxon>Nucleocytoviricota</taxon>
        <taxon>Megaviricetes</taxon>
        <taxon>Imitervirales</taxon>
        <taxon>Mimiviridae</taxon>
        <taxon>Megamimivirinae</taxon>
        <taxon>Mimivirus</taxon>
        <taxon>Mimivirus bradfordmassiliense</taxon>
    </lineage>
</organism>
<keyword id="KW-1185">Reference proteome</keyword>
<proteinExistence type="predicted"/>
<protein>
    <recommendedName>
        <fullName>Uncharacterized protein R317</fullName>
    </recommendedName>
</protein>